<keyword id="KW-1267">Proteomics identification</keyword>
<keyword id="KW-1185">Reference proteome</keyword>
<feature type="chain" id="PRO_0000332218" description="Melanoma-associated antigen B17">
    <location>
        <begin position="1"/>
        <end position="336"/>
    </location>
</feature>
<feature type="domain" description="MAGE" evidence="1">
    <location>
        <begin position="109"/>
        <end position="336"/>
    </location>
</feature>
<feature type="region of interest" description="Disordered" evidence="2">
    <location>
        <begin position="1"/>
        <end position="108"/>
    </location>
</feature>
<feature type="compositionally biased region" description="Basic residues" evidence="2">
    <location>
        <begin position="1"/>
        <end position="17"/>
    </location>
</feature>
<feature type="compositionally biased region" description="Low complexity" evidence="2">
    <location>
        <begin position="39"/>
        <end position="54"/>
    </location>
</feature>
<feature type="compositionally biased region" description="Low complexity" evidence="2">
    <location>
        <begin position="62"/>
        <end position="80"/>
    </location>
</feature>
<feature type="compositionally biased region" description="Polar residues" evidence="2">
    <location>
        <begin position="90"/>
        <end position="103"/>
    </location>
</feature>
<proteinExistence type="evidence at protein level"/>
<organism>
    <name type="scientific">Homo sapiens</name>
    <name type="common">Human</name>
    <dbReference type="NCBI Taxonomy" id="9606"/>
    <lineage>
        <taxon>Eukaryota</taxon>
        <taxon>Metazoa</taxon>
        <taxon>Chordata</taxon>
        <taxon>Craniata</taxon>
        <taxon>Vertebrata</taxon>
        <taxon>Euteleostomi</taxon>
        <taxon>Mammalia</taxon>
        <taxon>Eutheria</taxon>
        <taxon>Euarchontoglires</taxon>
        <taxon>Primates</taxon>
        <taxon>Haplorrhini</taxon>
        <taxon>Catarrhini</taxon>
        <taxon>Hominidae</taxon>
        <taxon>Homo</taxon>
    </lineage>
</organism>
<sequence length="336" mass="37578">MPRGQASKRRAREKRRQARGEDQCLGGAQATAAEKEKLPSSSSPACQSPPQSFPNAGIPQESQRASYPSSPASAVSLTSSDEGAKGQKGESPNSFHGPSSSESTGRDLLNTKTGELVQFLLNKYIRKEPITREAMLKVINRKYKQHFPEILRRSTENVEVVFGLYLKEMDPSRQSYVLVGKLDFPNQGSLSDGGGFPLSGLLMVLLSTIFMHGNRATEEEMWECLNALGMYKGRKHFIYGEPQELVTKDLVREGYLEYQQVPSSDPPRYEFLWGPRARAETSKMKVLEFVAKLNDTVASTYKSRYEEALREEEEQARARAVARDSARARASRSFQP</sequence>
<evidence type="ECO:0000255" key="1">
    <source>
        <dbReference type="PROSITE-ProRule" id="PRU00127"/>
    </source>
</evidence>
<evidence type="ECO:0000256" key="2">
    <source>
        <dbReference type="SAM" id="MobiDB-lite"/>
    </source>
</evidence>
<evidence type="ECO:0000305" key="3"/>
<name>MAGBH_HUMAN</name>
<dbReference type="EMBL" id="AC078993">
    <property type="status" value="NOT_ANNOTATED_CDS"/>
    <property type="molecule type" value="Genomic_DNA"/>
</dbReference>
<dbReference type="EMBL" id="CH471074">
    <property type="protein sequence ID" value="EAW98911.1"/>
    <property type="status" value="ALT_SEQ"/>
    <property type="molecule type" value="Genomic_DNA"/>
</dbReference>
<dbReference type="CCDS" id="CCDS59524.1"/>
<dbReference type="RefSeq" id="NP_001264236.1">
    <property type="nucleotide sequence ID" value="NM_001277307.2"/>
</dbReference>
<dbReference type="RefSeq" id="XP_011543869.1">
    <property type="nucleotide sequence ID" value="XM_011545567.2"/>
</dbReference>
<dbReference type="RefSeq" id="XP_047298311.1">
    <property type="nucleotide sequence ID" value="XM_047442355.1"/>
</dbReference>
<dbReference type="RefSeq" id="XP_054183550.1">
    <property type="nucleotide sequence ID" value="XM_054327575.1"/>
</dbReference>
<dbReference type="SMR" id="A8MXT2"/>
<dbReference type="BioGRID" id="570806">
    <property type="interactions" value="1"/>
</dbReference>
<dbReference type="FunCoup" id="A8MXT2">
    <property type="interactions" value="27"/>
</dbReference>
<dbReference type="STRING" id="9606.ENSP00000382884"/>
<dbReference type="GlyGen" id="A8MXT2">
    <property type="glycosylation" value="1 site, 1 O-linked glycan (1 site)"/>
</dbReference>
<dbReference type="iPTMnet" id="A8MXT2"/>
<dbReference type="PhosphoSitePlus" id="A8MXT2"/>
<dbReference type="BioMuta" id="MAGEB17"/>
<dbReference type="MassIVE" id="A8MXT2"/>
<dbReference type="PaxDb" id="9606-ENSP00000382884"/>
<dbReference type="PeptideAtlas" id="A8MXT2"/>
<dbReference type="ProteomicsDB" id="2350"/>
<dbReference type="Antibodypedia" id="5170">
    <property type="antibodies" value="8 antibodies from 7 providers"/>
</dbReference>
<dbReference type="DNASU" id="645864"/>
<dbReference type="Ensembl" id="ENST00000400003.1">
    <property type="protein sequence ID" value="ENSP00000382883.1"/>
    <property type="gene ID" value="ENSG00000182798.10"/>
</dbReference>
<dbReference type="Ensembl" id="ENST00000400004.6">
    <property type="protein sequence ID" value="ENSP00000382884.2"/>
    <property type="gene ID" value="ENSG00000182798.10"/>
</dbReference>
<dbReference type="GeneID" id="645864"/>
<dbReference type="KEGG" id="hsa:645864"/>
<dbReference type="MANE-Select" id="ENST00000400004.6">
    <property type="protein sequence ID" value="ENSP00000382884.2"/>
    <property type="RefSeq nucleotide sequence ID" value="NM_001277307.2"/>
    <property type="RefSeq protein sequence ID" value="NP_001264236.1"/>
</dbReference>
<dbReference type="UCSC" id="uc031tgu.2">
    <property type="organism name" value="human"/>
</dbReference>
<dbReference type="AGR" id="HGNC:17418"/>
<dbReference type="CTD" id="645864"/>
<dbReference type="GeneCards" id="MAGEB17"/>
<dbReference type="HGNC" id="HGNC:17418">
    <property type="gene designation" value="MAGEB17"/>
</dbReference>
<dbReference type="HPA" id="ENSG00000182798">
    <property type="expression patterns" value="Group enriched (pancreas, testis)"/>
</dbReference>
<dbReference type="MIM" id="300763">
    <property type="type" value="gene"/>
</dbReference>
<dbReference type="neXtProt" id="NX_A8MXT2"/>
<dbReference type="OpenTargets" id="ENSG00000182798"/>
<dbReference type="PharmGKB" id="PA134872991"/>
<dbReference type="VEuPathDB" id="HostDB:ENSG00000182798"/>
<dbReference type="eggNOG" id="KOG4562">
    <property type="taxonomic scope" value="Eukaryota"/>
</dbReference>
<dbReference type="GeneTree" id="ENSGT00940000166998"/>
<dbReference type="HOGENOM" id="CLU_039582_1_0_1"/>
<dbReference type="InParanoid" id="A8MXT2"/>
<dbReference type="OMA" id="VINKKYT"/>
<dbReference type="OrthoDB" id="205198at2759"/>
<dbReference type="PAN-GO" id="A8MXT2">
    <property type="GO annotations" value="2 GO annotations based on evolutionary models"/>
</dbReference>
<dbReference type="PhylomeDB" id="A8MXT2"/>
<dbReference type="TreeFam" id="TF328505"/>
<dbReference type="PathwayCommons" id="A8MXT2"/>
<dbReference type="BioGRID-ORCS" id="645864">
    <property type="hits" value="15 hits in 756 CRISPR screens"/>
</dbReference>
<dbReference type="GenomeRNAi" id="645864"/>
<dbReference type="Pharos" id="A8MXT2">
    <property type="development level" value="Tdark"/>
</dbReference>
<dbReference type="Proteomes" id="UP000005640">
    <property type="component" value="Chromosome X"/>
</dbReference>
<dbReference type="RNAct" id="A8MXT2">
    <property type="molecule type" value="protein"/>
</dbReference>
<dbReference type="Bgee" id="ENSG00000182798">
    <property type="expression patterns" value="Expressed in body of pancreas and 32 other cell types or tissues"/>
</dbReference>
<dbReference type="GO" id="GO:0005634">
    <property type="term" value="C:nucleus"/>
    <property type="evidence" value="ECO:0000318"/>
    <property type="project" value="GO_Central"/>
</dbReference>
<dbReference type="GO" id="GO:0000122">
    <property type="term" value="P:negative regulation of transcription by RNA polymerase II"/>
    <property type="evidence" value="ECO:0000318"/>
    <property type="project" value="GO_Central"/>
</dbReference>
<dbReference type="FunFam" id="1.10.10.1200:FF:000007">
    <property type="entry name" value="Melanoma-associated antigen C2"/>
    <property type="match status" value="1"/>
</dbReference>
<dbReference type="FunFam" id="1.10.10.1210:FF:000001">
    <property type="entry name" value="melanoma-associated antigen D1"/>
    <property type="match status" value="1"/>
</dbReference>
<dbReference type="Gene3D" id="1.10.10.1200">
    <property type="entry name" value="MAGE homology domain, winged helix WH1 motif"/>
    <property type="match status" value="1"/>
</dbReference>
<dbReference type="Gene3D" id="1.10.10.1210">
    <property type="entry name" value="MAGE homology domain, winged helix WH2 motif"/>
    <property type="match status" value="1"/>
</dbReference>
<dbReference type="InterPro" id="IPR037445">
    <property type="entry name" value="MAGE"/>
</dbReference>
<dbReference type="InterPro" id="IPR021072">
    <property type="entry name" value="MAGE_N"/>
</dbReference>
<dbReference type="InterPro" id="IPR041898">
    <property type="entry name" value="MAGE_WH1"/>
</dbReference>
<dbReference type="InterPro" id="IPR041899">
    <property type="entry name" value="MAGE_WH2"/>
</dbReference>
<dbReference type="InterPro" id="IPR002190">
    <property type="entry name" value="MHD_dom"/>
</dbReference>
<dbReference type="PANTHER" id="PTHR11736:SF88">
    <property type="entry name" value="MELANOMA-ASSOCIATED ANTIGEN B17"/>
    <property type="match status" value="1"/>
</dbReference>
<dbReference type="PANTHER" id="PTHR11736">
    <property type="entry name" value="MELANOMA-ASSOCIATED ANTIGEN MAGE ANTIGEN"/>
    <property type="match status" value="1"/>
</dbReference>
<dbReference type="Pfam" id="PF01454">
    <property type="entry name" value="MAGE"/>
    <property type="match status" value="1"/>
</dbReference>
<dbReference type="Pfam" id="PF12440">
    <property type="entry name" value="MAGE_N"/>
    <property type="match status" value="1"/>
</dbReference>
<dbReference type="SMART" id="SM01373">
    <property type="entry name" value="MAGE"/>
    <property type="match status" value="1"/>
</dbReference>
<dbReference type="SMART" id="SM01392">
    <property type="entry name" value="MAGE_N"/>
    <property type="match status" value="1"/>
</dbReference>
<dbReference type="PROSITE" id="PS50838">
    <property type="entry name" value="MAGE"/>
    <property type="match status" value="1"/>
</dbReference>
<accession>A8MXT2</accession>
<accession>A6NE98</accession>
<comment type="caution">
    <text evidence="3">Formerly thought to be the product of a pseudogene, although could be a bona fide protein. However, scarce EST evidence confirms only the C-terminal sequence.</text>
</comment>
<comment type="sequence caution" evidence="3">
    <conflict type="erroneous gene model prediction">
        <sequence resource="EMBL-CDS" id="EAW98911"/>
    </conflict>
</comment>
<reference key="1">
    <citation type="journal article" date="2005" name="Nature">
        <title>The DNA sequence of the human X chromosome.</title>
        <authorList>
            <person name="Ross M.T."/>
            <person name="Grafham D.V."/>
            <person name="Coffey A.J."/>
            <person name="Scherer S."/>
            <person name="McLay K."/>
            <person name="Muzny D."/>
            <person name="Platzer M."/>
            <person name="Howell G.R."/>
            <person name="Burrows C."/>
            <person name="Bird C.P."/>
            <person name="Frankish A."/>
            <person name="Lovell F.L."/>
            <person name="Howe K.L."/>
            <person name="Ashurst J.L."/>
            <person name="Fulton R.S."/>
            <person name="Sudbrak R."/>
            <person name="Wen G."/>
            <person name="Jones M.C."/>
            <person name="Hurles M.E."/>
            <person name="Andrews T.D."/>
            <person name="Scott C.E."/>
            <person name="Searle S."/>
            <person name="Ramser J."/>
            <person name="Whittaker A."/>
            <person name="Deadman R."/>
            <person name="Carter N.P."/>
            <person name="Hunt S.E."/>
            <person name="Chen R."/>
            <person name="Cree A."/>
            <person name="Gunaratne P."/>
            <person name="Havlak P."/>
            <person name="Hodgson A."/>
            <person name="Metzker M.L."/>
            <person name="Richards S."/>
            <person name="Scott G."/>
            <person name="Steffen D."/>
            <person name="Sodergren E."/>
            <person name="Wheeler D.A."/>
            <person name="Worley K.C."/>
            <person name="Ainscough R."/>
            <person name="Ambrose K.D."/>
            <person name="Ansari-Lari M.A."/>
            <person name="Aradhya S."/>
            <person name="Ashwell R.I."/>
            <person name="Babbage A.K."/>
            <person name="Bagguley C.L."/>
            <person name="Ballabio A."/>
            <person name="Banerjee R."/>
            <person name="Barker G.E."/>
            <person name="Barlow K.F."/>
            <person name="Barrett I.P."/>
            <person name="Bates K.N."/>
            <person name="Beare D.M."/>
            <person name="Beasley H."/>
            <person name="Beasley O."/>
            <person name="Beck A."/>
            <person name="Bethel G."/>
            <person name="Blechschmidt K."/>
            <person name="Brady N."/>
            <person name="Bray-Allen S."/>
            <person name="Bridgeman A.M."/>
            <person name="Brown A.J."/>
            <person name="Brown M.J."/>
            <person name="Bonnin D."/>
            <person name="Bruford E.A."/>
            <person name="Buhay C."/>
            <person name="Burch P."/>
            <person name="Burford D."/>
            <person name="Burgess J."/>
            <person name="Burrill W."/>
            <person name="Burton J."/>
            <person name="Bye J.M."/>
            <person name="Carder C."/>
            <person name="Carrel L."/>
            <person name="Chako J."/>
            <person name="Chapman J.C."/>
            <person name="Chavez D."/>
            <person name="Chen E."/>
            <person name="Chen G."/>
            <person name="Chen Y."/>
            <person name="Chen Z."/>
            <person name="Chinault C."/>
            <person name="Ciccodicola A."/>
            <person name="Clark S.Y."/>
            <person name="Clarke G."/>
            <person name="Clee C.M."/>
            <person name="Clegg S."/>
            <person name="Clerc-Blankenburg K."/>
            <person name="Clifford K."/>
            <person name="Cobley V."/>
            <person name="Cole C.G."/>
            <person name="Conquer J.S."/>
            <person name="Corby N."/>
            <person name="Connor R.E."/>
            <person name="David R."/>
            <person name="Davies J."/>
            <person name="Davis C."/>
            <person name="Davis J."/>
            <person name="Delgado O."/>
            <person name="Deshazo D."/>
            <person name="Dhami P."/>
            <person name="Ding Y."/>
            <person name="Dinh H."/>
            <person name="Dodsworth S."/>
            <person name="Draper H."/>
            <person name="Dugan-Rocha S."/>
            <person name="Dunham A."/>
            <person name="Dunn M."/>
            <person name="Durbin K.J."/>
            <person name="Dutta I."/>
            <person name="Eades T."/>
            <person name="Ellwood M."/>
            <person name="Emery-Cohen A."/>
            <person name="Errington H."/>
            <person name="Evans K.L."/>
            <person name="Faulkner L."/>
            <person name="Francis F."/>
            <person name="Frankland J."/>
            <person name="Fraser A.E."/>
            <person name="Galgoczy P."/>
            <person name="Gilbert J."/>
            <person name="Gill R."/>
            <person name="Gloeckner G."/>
            <person name="Gregory S.G."/>
            <person name="Gribble S."/>
            <person name="Griffiths C."/>
            <person name="Grocock R."/>
            <person name="Gu Y."/>
            <person name="Gwilliam R."/>
            <person name="Hamilton C."/>
            <person name="Hart E.A."/>
            <person name="Hawes A."/>
            <person name="Heath P.D."/>
            <person name="Heitmann K."/>
            <person name="Hennig S."/>
            <person name="Hernandez J."/>
            <person name="Hinzmann B."/>
            <person name="Ho S."/>
            <person name="Hoffs M."/>
            <person name="Howden P.J."/>
            <person name="Huckle E.J."/>
            <person name="Hume J."/>
            <person name="Hunt P.J."/>
            <person name="Hunt A.R."/>
            <person name="Isherwood J."/>
            <person name="Jacob L."/>
            <person name="Johnson D."/>
            <person name="Jones S."/>
            <person name="de Jong P.J."/>
            <person name="Joseph S.S."/>
            <person name="Keenan S."/>
            <person name="Kelly S."/>
            <person name="Kershaw J.K."/>
            <person name="Khan Z."/>
            <person name="Kioschis P."/>
            <person name="Klages S."/>
            <person name="Knights A.J."/>
            <person name="Kosiura A."/>
            <person name="Kovar-Smith C."/>
            <person name="Laird G.K."/>
            <person name="Langford C."/>
            <person name="Lawlor S."/>
            <person name="Leversha M."/>
            <person name="Lewis L."/>
            <person name="Liu W."/>
            <person name="Lloyd C."/>
            <person name="Lloyd D.M."/>
            <person name="Loulseged H."/>
            <person name="Loveland J.E."/>
            <person name="Lovell J.D."/>
            <person name="Lozado R."/>
            <person name="Lu J."/>
            <person name="Lyne R."/>
            <person name="Ma J."/>
            <person name="Maheshwari M."/>
            <person name="Matthews L.H."/>
            <person name="McDowall J."/>
            <person name="McLaren S."/>
            <person name="McMurray A."/>
            <person name="Meidl P."/>
            <person name="Meitinger T."/>
            <person name="Milne S."/>
            <person name="Miner G."/>
            <person name="Mistry S.L."/>
            <person name="Morgan M."/>
            <person name="Morris S."/>
            <person name="Mueller I."/>
            <person name="Mullikin J.C."/>
            <person name="Nguyen N."/>
            <person name="Nordsiek G."/>
            <person name="Nyakatura G."/>
            <person name="O'dell C.N."/>
            <person name="Okwuonu G."/>
            <person name="Palmer S."/>
            <person name="Pandian R."/>
            <person name="Parker D."/>
            <person name="Parrish J."/>
            <person name="Pasternak S."/>
            <person name="Patel D."/>
            <person name="Pearce A.V."/>
            <person name="Pearson D.M."/>
            <person name="Pelan S.E."/>
            <person name="Perez L."/>
            <person name="Porter K.M."/>
            <person name="Ramsey Y."/>
            <person name="Reichwald K."/>
            <person name="Rhodes S."/>
            <person name="Ridler K.A."/>
            <person name="Schlessinger D."/>
            <person name="Schueler M.G."/>
            <person name="Sehra H.K."/>
            <person name="Shaw-Smith C."/>
            <person name="Shen H."/>
            <person name="Sheridan E.M."/>
            <person name="Shownkeen R."/>
            <person name="Skuce C.D."/>
            <person name="Smith M.L."/>
            <person name="Sotheran E.C."/>
            <person name="Steingruber H.E."/>
            <person name="Steward C.A."/>
            <person name="Storey R."/>
            <person name="Swann R.M."/>
            <person name="Swarbreck D."/>
            <person name="Tabor P.E."/>
            <person name="Taudien S."/>
            <person name="Taylor T."/>
            <person name="Teague B."/>
            <person name="Thomas K."/>
            <person name="Thorpe A."/>
            <person name="Timms K."/>
            <person name="Tracey A."/>
            <person name="Trevanion S."/>
            <person name="Tromans A.C."/>
            <person name="d'Urso M."/>
            <person name="Verduzco D."/>
            <person name="Villasana D."/>
            <person name="Waldron L."/>
            <person name="Wall M."/>
            <person name="Wang Q."/>
            <person name="Warren J."/>
            <person name="Warry G.L."/>
            <person name="Wei X."/>
            <person name="West A."/>
            <person name="Whitehead S.L."/>
            <person name="Whiteley M.N."/>
            <person name="Wilkinson J.E."/>
            <person name="Willey D.L."/>
            <person name="Williams G."/>
            <person name="Williams L."/>
            <person name="Williamson A."/>
            <person name="Williamson H."/>
            <person name="Wilming L."/>
            <person name="Woodmansey R.L."/>
            <person name="Wray P.W."/>
            <person name="Yen J."/>
            <person name="Zhang J."/>
            <person name="Zhou J."/>
            <person name="Zoghbi H."/>
            <person name="Zorilla S."/>
            <person name="Buck D."/>
            <person name="Reinhardt R."/>
            <person name="Poustka A."/>
            <person name="Rosenthal A."/>
            <person name="Lehrach H."/>
            <person name="Meindl A."/>
            <person name="Minx P.J."/>
            <person name="Hillier L.W."/>
            <person name="Willard H.F."/>
            <person name="Wilson R.K."/>
            <person name="Waterston R.H."/>
            <person name="Rice C.M."/>
            <person name="Vaudin M."/>
            <person name="Coulson A."/>
            <person name="Nelson D.L."/>
            <person name="Weinstock G."/>
            <person name="Sulston J.E."/>
            <person name="Durbin R.M."/>
            <person name="Hubbard T."/>
            <person name="Gibbs R.A."/>
            <person name="Beck S."/>
            <person name="Rogers J."/>
            <person name="Bentley D.R."/>
        </authorList>
    </citation>
    <scope>NUCLEOTIDE SEQUENCE [LARGE SCALE GENOMIC DNA]</scope>
</reference>
<reference key="2">
    <citation type="submission" date="2005-07" db="EMBL/GenBank/DDBJ databases">
        <authorList>
            <person name="Mural R.J."/>
            <person name="Istrail S."/>
            <person name="Sutton G.G."/>
            <person name="Florea L."/>
            <person name="Halpern A.L."/>
            <person name="Mobarry C.M."/>
            <person name="Lippert R."/>
            <person name="Walenz B."/>
            <person name="Shatkay H."/>
            <person name="Dew I."/>
            <person name="Miller J.R."/>
            <person name="Flanigan M.J."/>
            <person name="Edwards N.J."/>
            <person name="Bolanos R."/>
            <person name="Fasulo D."/>
            <person name="Halldorsson B.V."/>
            <person name="Hannenhalli S."/>
            <person name="Turner R."/>
            <person name="Yooseph S."/>
            <person name="Lu F."/>
            <person name="Nusskern D.R."/>
            <person name="Shue B.C."/>
            <person name="Zheng X.H."/>
            <person name="Zhong F."/>
            <person name="Delcher A.L."/>
            <person name="Huson D.H."/>
            <person name="Kravitz S.A."/>
            <person name="Mouchard L."/>
            <person name="Reinert K."/>
            <person name="Remington K.A."/>
            <person name="Clark A.G."/>
            <person name="Waterman M.S."/>
            <person name="Eichler E.E."/>
            <person name="Adams M.D."/>
            <person name="Hunkapiller M.W."/>
            <person name="Myers E.W."/>
            <person name="Venter J.C."/>
        </authorList>
    </citation>
    <scope>NUCLEOTIDE SEQUENCE [LARGE SCALE GENOMIC DNA]</scope>
</reference>
<gene>
    <name type="primary">MAGEB17</name>
</gene>
<protein>
    <recommendedName>
        <fullName>Melanoma-associated antigen B17</fullName>
    </recommendedName>
</protein>